<dbReference type="EMBL" id="AE017354">
    <property type="protein sequence ID" value="AAU26224.1"/>
    <property type="molecule type" value="Genomic_DNA"/>
</dbReference>
<dbReference type="RefSeq" id="WP_010945878.1">
    <property type="nucleotide sequence ID" value="NC_002942.5"/>
</dbReference>
<dbReference type="RefSeq" id="YP_094171.1">
    <property type="nucleotide sequence ID" value="NC_002942.5"/>
</dbReference>
<dbReference type="SMR" id="Q5ZZ94"/>
<dbReference type="STRING" id="272624.lpg0117"/>
<dbReference type="PaxDb" id="272624-lpg0117"/>
<dbReference type="GeneID" id="57034124"/>
<dbReference type="KEGG" id="lpn:lpg0117"/>
<dbReference type="PATRIC" id="fig|272624.6.peg.123"/>
<dbReference type="eggNOG" id="COG0509">
    <property type="taxonomic scope" value="Bacteria"/>
</dbReference>
<dbReference type="HOGENOM" id="CLU_097408_2_0_6"/>
<dbReference type="OrthoDB" id="9796712at2"/>
<dbReference type="Proteomes" id="UP000000609">
    <property type="component" value="Chromosome"/>
</dbReference>
<dbReference type="GO" id="GO:0005829">
    <property type="term" value="C:cytosol"/>
    <property type="evidence" value="ECO:0007669"/>
    <property type="project" value="TreeGrafter"/>
</dbReference>
<dbReference type="GO" id="GO:0005960">
    <property type="term" value="C:glycine cleavage complex"/>
    <property type="evidence" value="ECO:0007669"/>
    <property type="project" value="InterPro"/>
</dbReference>
<dbReference type="GO" id="GO:0019464">
    <property type="term" value="P:glycine decarboxylation via glycine cleavage system"/>
    <property type="evidence" value="ECO:0007669"/>
    <property type="project" value="UniProtKB-UniRule"/>
</dbReference>
<dbReference type="CDD" id="cd06848">
    <property type="entry name" value="GCS_H"/>
    <property type="match status" value="1"/>
</dbReference>
<dbReference type="Gene3D" id="2.40.50.100">
    <property type="match status" value="1"/>
</dbReference>
<dbReference type="HAMAP" id="MF_00272">
    <property type="entry name" value="GcvH"/>
    <property type="match status" value="1"/>
</dbReference>
<dbReference type="InterPro" id="IPR003016">
    <property type="entry name" value="2-oxoA_DH_lipoyl-BS"/>
</dbReference>
<dbReference type="InterPro" id="IPR000089">
    <property type="entry name" value="Biotin_lipoyl"/>
</dbReference>
<dbReference type="InterPro" id="IPR002930">
    <property type="entry name" value="GCV_H"/>
</dbReference>
<dbReference type="InterPro" id="IPR033753">
    <property type="entry name" value="GCV_H/Fam206"/>
</dbReference>
<dbReference type="InterPro" id="IPR017453">
    <property type="entry name" value="GCV_H_sub"/>
</dbReference>
<dbReference type="InterPro" id="IPR011053">
    <property type="entry name" value="Single_hybrid_motif"/>
</dbReference>
<dbReference type="NCBIfam" id="TIGR00527">
    <property type="entry name" value="gcvH"/>
    <property type="match status" value="1"/>
</dbReference>
<dbReference type="NCBIfam" id="NF002270">
    <property type="entry name" value="PRK01202.1"/>
    <property type="match status" value="1"/>
</dbReference>
<dbReference type="PANTHER" id="PTHR11715">
    <property type="entry name" value="GLYCINE CLEAVAGE SYSTEM H PROTEIN"/>
    <property type="match status" value="1"/>
</dbReference>
<dbReference type="PANTHER" id="PTHR11715:SF3">
    <property type="entry name" value="GLYCINE CLEAVAGE SYSTEM H PROTEIN-RELATED"/>
    <property type="match status" value="1"/>
</dbReference>
<dbReference type="Pfam" id="PF01597">
    <property type="entry name" value="GCV_H"/>
    <property type="match status" value="1"/>
</dbReference>
<dbReference type="SUPFAM" id="SSF51230">
    <property type="entry name" value="Single hybrid motif"/>
    <property type="match status" value="1"/>
</dbReference>
<dbReference type="PROSITE" id="PS50968">
    <property type="entry name" value="BIOTINYL_LIPOYL"/>
    <property type="match status" value="1"/>
</dbReference>
<dbReference type="PROSITE" id="PS00189">
    <property type="entry name" value="LIPOYL"/>
    <property type="match status" value="1"/>
</dbReference>
<evidence type="ECO:0000255" key="1">
    <source>
        <dbReference type="HAMAP-Rule" id="MF_00272"/>
    </source>
</evidence>
<evidence type="ECO:0000255" key="2">
    <source>
        <dbReference type="PROSITE-ProRule" id="PRU01066"/>
    </source>
</evidence>
<sequence>MNDLKFTTTHEWLREDEEEVTVGITDHAQELLGDMVFVELPEIGDEVSAGQELGVVESVKAASDFYAPISGVVTAVNEAVGKNPALVNHDPYHEGWLVKLKPSHPDEIKSLLSDEQYQNEIAEEN</sequence>
<proteinExistence type="inferred from homology"/>
<accession>Q5ZZ94</accession>
<name>GCSH_LEGPH</name>
<feature type="chain" id="PRO_1000059184" description="Glycine cleavage system H protein">
    <location>
        <begin position="1"/>
        <end position="125"/>
    </location>
</feature>
<feature type="domain" description="Lipoyl-binding" evidence="2">
    <location>
        <begin position="19"/>
        <end position="101"/>
    </location>
</feature>
<feature type="modified residue" description="N6-lipoyllysine" evidence="1">
    <location>
        <position position="60"/>
    </location>
</feature>
<keyword id="KW-0450">Lipoyl</keyword>
<keyword id="KW-1185">Reference proteome</keyword>
<organism>
    <name type="scientific">Legionella pneumophila subsp. pneumophila (strain Philadelphia 1 / ATCC 33152 / DSM 7513)</name>
    <dbReference type="NCBI Taxonomy" id="272624"/>
    <lineage>
        <taxon>Bacteria</taxon>
        <taxon>Pseudomonadati</taxon>
        <taxon>Pseudomonadota</taxon>
        <taxon>Gammaproteobacteria</taxon>
        <taxon>Legionellales</taxon>
        <taxon>Legionellaceae</taxon>
        <taxon>Legionella</taxon>
    </lineage>
</organism>
<reference key="1">
    <citation type="journal article" date="2004" name="Science">
        <title>The genomic sequence of the accidental pathogen Legionella pneumophila.</title>
        <authorList>
            <person name="Chien M."/>
            <person name="Morozova I."/>
            <person name="Shi S."/>
            <person name="Sheng H."/>
            <person name="Chen J."/>
            <person name="Gomez S.M."/>
            <person name="Asamani G."/>
            <person name="Hill K."/>
            <person name="Nuara J."/>
            <person name="Feder M."/>
            <person name="Rineer J."/>
            <person name="Greenberg J.J."/>
            <person name="Steshenko V."/>
            <person name="Park S.H."/>
            <person name="Zhao B."/>
            <person name="Teplitskaya E."/>
            <person name="Edwards J.R."/>
            <person name="Pampou S."/>
            <person name="Georghiou A."/>
            <person name="Chou I.-C."/>
            <person name="Iannuccilli W."/>
            <person name="Ulz M.E."/>
            <person name="Kim D.H."/>
            <person name="Geringer-Sameth A."/>
            <person name="Goldsberry C."/>
            <person name="Morozov P."/>
            <person name="Fischer S.G."/>
            <person name="Segal G."/>
            <person name="Qu X."/>
            <person name="Rzhetsky A."/>
            <person name="Zhang P."/>
            <person name="Cayanis E."/>
            <person name="De Jong P.J."/>
            <person name="Ju J."/>
            <person name="Kalachikov S."/>
            <person name="Shuman H.A."/>
            <person name="Russo J.J."/>
        </authorList>
    </citation>
    <scope>NUCLEOTIDE SEQUENCE [LARGE SCALE GENOMIC DNA]</scope>
    <source>
        <strain>Philadelphia 1 / ATCC 33152 / DSM 7513</strain>
    </source>
</reference>
<comment type="function">
    <text evidence="1">The glycine cleavage system catalyzes the degradation of glycine. The H protein shuttles the methylamine group of glycine from the P protein to the T protein.</text>
</comment>
<comment type="cofactor">
    <cofactor evidence="1">
        <name>(R)-lipoate</name>
        <dbReference type="ChEBI" id="CHEBI:83088"/>
    </cofactor>
    <text evidence="1">Binds 1 lipoyl cofactor covalently.</text>
</comment>
<comment type="subunit">
    <text evidence="1">The glycine cleavage system is composed of four proteins: P, T, L and H.</text>
</comment>
<comment type="similarity">
    <text evidence="1">Belongs to the GcvH family.</text>
</comment>
<protein>
    <recommendedName>
        <fullName evidence="1">Glycine cleavage system H protein</fullName>
    </recommendedName>
</protein>
<gene>
    <name evidence="1" type="primary">gcvH</name>
    <name type="ordered locus">lpg0117</name>
</gene>